<keyword id="KW-0030">Aminoacyl-tRNA synthetase</keyword>
<keyword id="KW-0067">ATP-binding</keyword>
<keyword id="KW-0963">Cytoplasm</keyword>
<keyword id="KW-0436">Ligase</keyword>
<keyword id="KW-0547">Nucleotide-binding</keyword>
<keyword id="KW-0648">Protein biosynthesis</keyword>
<keyword id="KW-1185">Reference proteome</keyword>
<sequence>METIKRTKIVDVLKSDAFGTTVNVKGWVRTRRGSKQVNFIALNDGSTINNVQIVVDVDKLGDEFLKPITTGASISVNGILTQSQGKGQSVEIQATEIEIFGTADPATYPLQKKGHSMEFLREIAHLRPRTNTFGAVFRIRHNMAYAIHKFFHDRGFFYFHTPIITASDCEGAGQMFQVTTKNLYDLKKDENGSIIYEDDFFGKQASLTVSGQLEGELAATALGQIYTFGPTFRAENSNTPRHLAEFWMIEPEVAFNDITDNMELAEEFIKYCVQWALDNCMEDIKFLNDMFDKELIARLEGVLKDSFVRLPYTEGIKILEEAVAKGHKFEFPVYWGVDLASEHERFLVEDHFKRPVILTDYPKEIKAFYMKQNEDGKTVRAMDVLFPKIGEIIGGSEREADYDKLMTRIDELGIPMKDMWWYLDTRRFGTVPHSGFGLGFERLLLFVTGMANIRDVIPFPRTPNNAEF</sequence>
<proteinExistence type="inferred from homology"/>
<reference key="1">
    <citation type="journal article" date="2007" name="PLoS Biol.">
        <title>Evolution of symbiotic bacteria in the distal human intestine.</title>
        <authorList>
            <person name="Xu J."/>
            <person name="Mahowald M.A."/>
            <person name="Ley R.E."/>
            <person name="Lozupone C.A."/>
            <person name="Hamady M."/>
            <person name="Martens E.C."/>
            <person name="Henrissat B."/>
            <person name="Coutinho P.M."/>
            <person name="Minx P."/>
            <person name="Latreille P."/>
            <person name="Cordum H."/>
            <person name="Van Brunt A."/>
            <person name="Kim K."/>
            <person name="Fulton R.S."/>
            <person name="Fulton L.A."/>
            <person name="Clifton S.W."/>
            <person name="Wilson R.K."/>
            <person name="Knight R.D."/>
            <person name="Gordon J.I."/>
        </authorList>
    </citation>
    <scope>NUCLEOTIDE SEQUENCE [LARGE SCALE GENOMIC DNA]</scope>
    <source>
        <strain>ATCC 8503 / DSM 20701 / CIP 104284 / JCM 5825 / NCTC 11152</strain>
    </source>
</reference>
<dbReference type="EC" id="6.1.1.22" evidence="1"/>
<dbReference type="EMBL" id="CP000140">
    <property type="protein sequence ID" value="ABR45415.1"/>
    <property type="molecule type" value="Genomic_DNA"/>
</dbReference>
<dbReference type="RefSeq" id="WP_012056148.1">
    <property type="nucleotide sequence ID" value="NC_009615.1"/>
</dbReference>
<dbReference type="SMR" id="A6LIA1"/>
<dbReference type="STRING" id="435591.BDI_3727"/>
<dbReference type="PaxDb" id="435591-BDI_3727"/>
<dbReference type="KEGG" id="pdi:BDI_3727"/>
<dbReference type="PATRIC" id="fig|435591.13.peg.3683"/>
<dbReference type="eggNOG" id="COG0017">
    <property type="taxonomic scope" value="Bacteria"/>
</dbReference>
<dbReference type="HOGENOM" id="CLU_004553_2_0_10"/>
<dbReference type="BioCyc" id="PDIS435591:G1G5A-3822-MONOMER"/>
<dbReference type="Proteomes" id="UP000000566">
    <property type="component" value="Chromosome"/>
</dbReference>
<dbReference type="GO" id="GO:0005737">
    <property type="term" value="C:cytoplasm"/>
    <property type="evidence" value="ECO:0007669"/>
    <property type="project" value="UniProtKB-SubCell"/>
</dbReference>
<dbReference type="GO" id="GO:0004816">
    <property type="term" value="F:asparagine-tRNA ligase activity"/>
    <property type="evidence" value="ECO:0007669"/>
    <property type="project" value="UniProtKB-UniRule"/>
</dbReference>
<dbReference type="GO" id="GO:0005524">
    <property type="term" value="F:ATP binding"/>
    <property type="evidence" value="ECO:0007669"/>
    <property type="project" value="UniProtKB-UniRule"/>
</dbReference>
<dbReference type="GO" id="GO:0003676">
    <property type="term" value="F:nucleic acid binding"/>
    <property type="evidence" value="ECO:0007669"/>
    <property type="project" value="InterPro"/>
</dbReference>
<dbReference type="GO" id="GO:0006421">
    <property type="term" value="P:asparaginyl-tRNA aminoacylation"/>
    <property type="evidence" value="ECO:0007669"/>
    <property type="project" value="UniProtKB-UniRule"/>
</dbReference>
<dbReference type="CDD" id="cd00776">
    <property type="entry name" value="AsxRS_core"/>
    <property type="match status" value="1"/>
</dbReference>
<dbReference type="CDD" id="cd04318">
    <property type="entry name" value="EcAsnRS_like_N"/>
    <property type="match status" value="1"/>
</dbReference>
<dbReference type="FunFam" id="3.30.930.10:FF:000016">
    <property type="entry name" value="Asparagine--tRNA ligase"/>
    <property type="match status" value="1"/>
</dbReference>
<dbReference type="Gene3D" id="3.30.930.10">
    <property type="entry name" value="Bira Bifunctional Protein, Domain 2"/>
    <property type="match status" value="1"/>
</dbReference>
<dbReference type="Gene3D" id="2.40.50.140">
    <property type="entry name" value="Nucleic acid-binding proteins"/>
    <property type="match status" value="1"/>
</dbReference>
<dbReference type="HAMAP" id="MF_00534">
    <property type="entry name" value="Asn_tRNA_synth"/>
    <property type="match status" value="1"/>
</dbReference>
<dbReference type="InterPro" id="IPR004364">
    <property type="entry name" value="Aa-tRNA-synt_II"/>
</dbReference>
<dbReference type="InterPro" id="IPR006195">
    <property type="entry name" value="aa-tRNA-synth_II"/>
</dbReference>
<dbReference type="InterPro" id="IPR045864">
    <property type="entry name" value="aa-tRNA-synth_II/BPL/LPL"/>
</dbReference>
<dbReference type="InterPro" id="IPR004522">
    <property type="entry name" value="Asn-tRNA-ligase"/>
</dbReference>
<dbReference type="InterPro" id="IPR002312">
    <property type="entry name" value="Asp/Asn-tRNA-synth_IIb"/>
</dbReference>
<dbReference type="InterPro" id="IPR012340">
    <property type="entry name" value="NA-bd_OB-fold"/>
</dbReference>
<dbReference type="InterPro" id="IPR004365">
    <property type="entry name" value="NA-bd_OB_tRNA"/>
</dbReference>
<dbReference type="NCBIfam" id="TIGR00457">
    <property type="entry name" value="asnS"/>
    <property type="match status" value="1"/>
</dbReference>
<dbReference type="NCBIfam" id="NF003037">
    <property type="entry name" value="PRK03932.1"/>
    <property type="match status" value="1"/>
</dbReference>
<dbReference type="PANTHER" id="PTHR22594:SF34">
    <property type="entry name" value="ASPARAGINE--TRNA LIGASE, MITOCHONDRIAL-RELATED"/>
    <property type="match status" value="1"/>
</dbReference>
<dbReference type="PANTHER" id="PTHR22594">
    <property type="entry name" value="ASPARTYL/LYSYL-TRNA SYNTHETASE"/>
    <property type="match status" value="1"/>
</dbReference>
<dbReference type="Pfam" id="PF00152">
    <property type="entry name" value="tRNA-synt_2"/>
    <property type="match status" value="1"/>
</dbReference>
<dbReference type="Pfam" id="PF01336">
    <property type="entry name" value="tRNA_anti-codon"/>
    <property type="match status" value="1"/>
</dbReference>
<dbReference type="PRINTS" id="PR01042">
    <property type="entry name" value="TRNASYNTHASP"/>
</dbReference>
<dbReference type="SUPFAM" id="SSF55681">
    <property type="entry name" value="Class II aaRS and biotin synthetases"/>
    <property type="match status" value="1"/>
</dbReference>
<dbReference type="SUPFAM" id="SSF50249">
    <property type="entry name" value="Nucleic acid-binding proteins"/>
    <property type="match status" value="1"/>
</dbReference>
<dbReference type="PROSITE" id="PS50862">
    <property type="entry name" value="AA_TRNA_LIGASE_II"/>
    <property type="match status" value="1"/>
</dbReference>
<accession>A6LIA1</accession>
<organism>
    <name type="scientific">Parabacteroides distasonis (strain ATCC 8503 / DSM 20701 / CIP 104284 / JCM 5825 / NCTC 11152)</name>
    <dbReference type="NCBI Taxonomy" id="435591"/>
    <lineage>
        <taxon>Bacteria</taxon>
        <taxon>Pseudomonadati</taxon>
        <taxon>Bacteroidota</taxon>
        <taxon>Bacteroidia</taxon>
        <taxon>Bacteroidales</taxon>
        <taxon>Tannerellaceae</taxon>
        <taxon>Parabacteroides</taxon>
    </lineage>
</organism>
<feature type="chain" id="PRO_1000051412" description="Asparagine--tRNA ligase">
    <location>
        <begin position="1"/>
        <end position="468"/>
    </location>
</feature>
<name>SYN_PARD8</name>
<gene>
    <name evidence="1" type="primary">asnS</name>
    <name type="ordered locus">BDI_3727</name>
</gene>
<comment type="catalytic activity">
    <reaction evidence="1">
        <text>tRNA(Asn) + L-asparagine + ATP = L-asparaginyl-tRNA(Asn) + AMP + diphosphate + H(+)</text>
        <dbReference type="Rhea" id="RHEA:11180"/>
        <dbReference type="Rhea" id="RHEA-COMP:9659"/>
        <dbReference type="Rhea" id="RHEA-COMP:9674"/>
        <dbReference type="ChEBI" id="CHEBI:15378"/>
        <dbReference type="ChEBI" id="CHEBI:30616"/>
        <dbReference type="ChEBI" id="CHEBI:33019"/>
        <dbReference type="ChEBI" id="CHEBI:58048"/>
        <dbReference type="ChEBI" id="CHEBI:78442"/>
        <dbReference type="ChEBI" id="CHEBI:78515"/>
        <dbReference type="ChEBI" id="CHEBI:456215"/>
        <dbReference type="EC" id="6.1.1.22"/>
    </reaction>
</comment>
<comment type="subunit">
    <text evidence="1">Homodimer.</text>
</comment>
<comment type="subcellular location">
    <subcellularLocation>
        <location evidence="1">Cytoplasm</location>
    </subcellularLocation>
</comment>
<comment type="similarity">
    <text evidence="1">Belongs to the class-II aminoacyl-tRNA synthetase family.</text>
</comment>
<protein>
    <recommendedName>
        <fullName evidence="1">Asparagine--tRNA ligase</fullName>
        <ecNumber evidence="1">6.1.1.22</ecNumber>
    </recommendedName>
    <alternativeName>
        <fullName evidence="1">Asparaginyl-tRNA synthetase</fullName>
        <shortName evidence="1">AsnRS</shortName>
    </alternativeName>
</protein>
<evidence type="ECO:0000255" key="1">
    <source>
        <dbReference type="HAMAP-Rule" id="MF_00534"/>
    </source>
</evidence>